<dbReference type="EMBL" id="X75162">
    <property type="protein sequence ID" value="CAA53005.1"/>
    <property type="molecule type" value="mRNA"/>
</dbReference>
<dbReference type="EMBL" id="AL132967">
    <property type="protein sequence ID" value="CAB62009.1"/>
    <property type="molecule type" value="Genomic_DNA"/>
</dbReference>
<dbReference type="EMBL" id="CP002686">
    <property type="protein sequence ID" value="AEE78482.1"/>
    <property type="molecule type" value="Genomic_DNA"/>
</dbReference>
<dbReference type="EMBL" id="CP002686">
    <property type="protein sequence ID" value="AEE78483.1"/>
    <property type="molecule type" value="Genomic_DNA"/>
</dbReference>
<dbReference type="EMBL" id="CP002686">
    <property type="protein sequence ID" value="AEE78484.1"/>
    <property type="molecule type" value="Genomic_DNA"/>
</dbReference>
<dbReference type="EMBL" id="CP002686">
    <property type="protein sequence ID" value="ANM65192.1"/>
    <property type="molecule type" value="Genomic_DNA"/>
</dbReference>
<dbReference type="EMBL" id="CP002686">
    <property type="protein sequence ID" value="ANM65193.1"/>
    <property type="molecule type" value="Genomic_DNA"/>
</dbReference>
<dbReference type="EMBL" id="AF428384">
    <property type="protein sequence ID" value="AAL16152.1"/>
    <property type="molecule type" value="mRNA"/>
</dbReference>
<dbReference type="EMBL" id="AY050854">
    <property type="protein sequence ID" value="AAK92791.1"/>
    <property type="molecule type" value="mRNA"/>
</dbReference>
<dbReference type="EMBL" id="AY065137">
    <property type="protein sequence ID" value="AAL38313.1"/>
    <property type="molecule type" value="mRNA"/>
</dbReference>
<dbReference type="EMBL" id="AY079381">
    <property type="protein sequence ID" value="AAL85112.1"/>
    <property type="molecule type" value="mRNA"/>
</dbReference>
<dbReference type="EMBL" id="AY081595">
    <property type="protein sequence ID" value="AAM10157.1"/>
    <property type="molecule type" value="mRNA"/>
</dbReference>
<dbReference type="EMBL" id="AY084928">
    <property type="protein sequence ID" value="AAM61490.1"/>
    <property type="molecule type" value="mRNA"/>
</dbReference>
<dbReference type="EMBL" id="Z34257">
    <property type="protein sequence ID" value="CAA84015.1"/>
    <property type="molecule type" value="mRNA"/>
</dbReference>
<dbReference type="PIR" id="S37271">
    <property type="entry name" value="S37271"/>
</dbReference>
<dbReference type="RefSeq" id="NP_001030831.1">
    <molecule id="P41127-1"/>
    <property type="nucleotide sequence ID" value="NM_001035754.1"/>
</dbReference>
<dbReference type="RefSeq" id="NP_001327179.1">
    <molecule id="P41127-1"/>
    <property type="nucleotide sequence ID" value="NM_001339393.1"/>
</dbReference>
<dbReference type="RefSeq" id="NP_001327180.1">
    <molecule id="P41127-1"/>
    <property type="nucleotide sequence ID" value="NM_001339394.1"/>
</dbReference>
<dbReference type="RefSeq" id="NP_190470.1">
    <molecule id="P41127-1"/>
    <property type="nucleotide sequence ID" value="NM_114760.4"/>
</dbReference>
<dbReference type="RefSeq" id="NP_850672.1">
    <molecule id="P41127-1"/>
    <property type="nucleotide sequence ID" value="NM_180341.3"/>
</dbReference>
<dbReference type="SMR" id="P41127"/>
<dbReference type="BioGRID" id="9380">
    <property type="interactions" value="135"/>
</dbReference>
<dbReference type="FunCoup" id="P41127">
    <property type="interactions" value="3226"/>
</dbReference>
<dbReference type="IntAct" id="P41127">
    <property type="interactions" value="1"/>
</dbReference>
<dbReference type="STRING" id="3702.P41127"/>
<dbReference type="iPTMnet" id="P41127"/>
<dbReference type="PaxDb" id="3702-AT3G49010.3"/>
<dbReference type="ProteomicsDB" id="226393">
    <molecule id="P41127-1"/>
</dbReference>
<dbReference type="EnsemblPlants" id="AT3G49010.1">
    <molecule id="P41127-1"/>
    <property type="protein sequence ID" value="AT3G49010.1"/>
    <property type="gene ID" value="AT3G49010"/>
</dbReference>
<dbReference type="EnsemblPlants" id="AT3G49010.2">
    <molecule id="P41127-1"/>
    <property type="protein sequence ID" value="AT3G49010.2"/>
    <property type="gene ID" value="AT3G49010"/>
</dbReference>
<dbReference type="EnsemblPlants" id="AT3G49010.3">
    <molecule id="P41127-1"/>
    <property type="protein sequence ID" value="AT3G49010.3"/>
    <property type="gene ID" value="AT3G49010"/>
</dbReference>
<dbReference type="EnsemblPlants" id="AT3G49010.6">
    <molecule id="P41127-1"/>
    <property type="protein sequence ID" value="AT3G49010.6"/>
    <property type="gene ID" value="AT3G49010"/>
</dbReference>
<dbReference type="EnsemblPlants" id="AT3G49010.7">
    <molecule id="P41127-1"/>
    <property type="protein sequence ID" value="AT3G49010.7"/>
    <property type="gene ID" value="AT3G49010"/>
</dbReference>
<dbReference type="GeneID" id="824062"/>
<dbReference type="Gramene" id="AT3G49010.1">
    <molecule id="P41127-1"/>
    <property type="protein sequence ID" value="AT3G49010.1"/>
    <property type="gene ID" value="AT3G49010"/>
</dbReference>
<dbReference type="Gramene" id="AT3G49010.2">
    <molecule id="P41127-1"/>
    <property type="protein sequence ID" value="AT3G49010.2"/>
    <property type="gene ID" value="AT3G49010"/>
</dbReference>
<dbReference type="Gramene" id="AT3G49010.3">
    <molecule id="P41127-1"/>
    <property type="protein sequence ID" value="AT3G49010.3"/>
    <property type="gene ID" value="AT3G49010"/>
</dbReference>
<dbReference type="Gramene" id="AT3G49010.6">
    <molecule id="P41127-1"/>
    <property type="protein sequence ID" value="AT3G49010.6"/>
    <property type="gene ID" value="AT3G49010"/>
</dbReference>
<dbReference type="Gramene" id="AT3G49010.7">
    <molecule id="P41127-1"/>
    <property type="protein sequence ID" value="AT3G49010.7"/>
    <property type="gene ID" value="AT3G49010"/>
</dbReference>
<dbReference type="KEGG" id="ath:AT3G49010"/>
<dbReference type="Araport" id="AT3G49010"/>
<dbReference type="TAIR" id="AT3G49010">
    <property type="gene designation" value="BBC1"/>
</dbReference>
<dbReference type="eggNOG" id="KOG3295">
    <property type="taxonomic scope" value="Eukaryota"/>
</dbReference>
<dbReference type="InParanoid" id="P41127"/>
<dbReference type="OMA" id="IQKNHFR"/>
<dbReference type="OrthoDB" id="1092412at2759"/>
<dbReference type="PhylomeDB" id="P41127"/>
<dbReference type="CD-CODE" id="4299E36E">
    <property type="entry name" value="Nucleolus"/>
</dbReference>
<dbReference type="PRO" id="PR:P41127"/>
<dbReference type="Proteomes" id="UP000006548">
    <property type="component" value="Chromosome 3"/>
</dbReference>
<dbReference type="ExpressionAtlas" id="P41127">
    <property type="expression patterns" value="baseline and differential"/>
</dbReference>
<dbReference type="GO" id="GO:0005829">
    <property type="term" value="C:cytosol"/>
    <property type="evidence" value="ECO:0007005"/>
    <property type="project" value="TAIR"/>
</dbReference>
<dbReference type="GO" id="GO:0022625">
    <property type="term" value="C:cytosolic large ribosomal subunit"/>
    <property type="evidence" value="ECO:0007005"/>
    <property type="project" value="TAIR"/>
</dbReference>
<dbReference type="GO" id="GO:0022626">
    <property type="term" value="C:cytosolic ribosome"/>
    <property type="evidence" value="ECO:0007005"/>
    <property type="project" value="TAIR"/>
</dbReference>
<dbReference type="GO" id="GO:0005730">
    <property type="term" value="C:nucleolus"/>
    <property type="evidence" value="ECO:0007005"/>
    <property type="project" value="TAIR"/>
</dbReference>
<dbReference type="GO" id="GO:0009505">
    <property type="term" value="C:plant-type cell wall"/>
    <property type="evidence" value="ECO:0007005"/>
    <property type="project" value="TAIR"/>
</dbReference>
<dbReference type="GO" id="GO:0000325">
    <property type="term" value="C:plant-type vacuole"/>
    <property type="evidence" value="ECO:0007005"/>
    <property type="project" value="TAIR"/>
</dbReference>
<dbReference type="GO" id="GO:0009506">
    <property type="term" value="C:plasmodesma"/>
    <property type="evidence" value="ECO:0007005"/>
    <property type="project" value="TAIR"/>
</dbReference>
<dbReference type="GO" id="GO:0003729">
    <property type="term" value="F:mRNA binding"/>
    <property type="evidence" value="ECO:0000314"/>
    <property type="project" value="TAIR"/>
</dbReference>
<dbReference type="GO" id="GO:0003735">
    <property type="term" value="F:structural constituent of ribosome"/>
    <property type="evidence" value="ECO:0000314"/>
    <property type="project" value="CAFA"/>
</dbReference>
<dbReference type="GO" id="GO:0006412">
    <property type="term" value="P:translation"/>
    <property type="evidence" value="ECO:0007669"/>
    <property type="project" value="InterPro"/>
</dbReference>
<dbReference type="FunFam" id="1.20.5.110:FF:000003">
    <property type="entry name" value="60S ribosomal protein L13"/>
    <property type="match status" value="1"/>
</dbReference>
<dbReference type="Gene3D" id="1.20.5.110">
    <property type="match status" value="1"/>
</dbReference>
<dbReference type="HAMAP" id="MF_00499">
    <property type="entry name" value="Ribosomal_eL13"/>
    <property type="match status" value="1"/>
</dbReference>
<dbReference type="InterPro" id="IPR001380">
    <property type="entry name" value="Ribosomal_eL13"/>
</dbReference>
<dbReference type="InterPro" id="IPR018256">
    <property type="entry name" value="Ribosomal_eL13_CS"/>
</dbReference>
<dbReference type="PANTHER" id="PTHR11722">
    <property type="entry name" value="60S RIBOSOMAL PROTEIN L13"/>
    <property type="match status" value="1"/>
</dbReference>
<dbReference type="PANTHER" id="PTHR11722:SF12">
    <property type="entry name" value="LARGE RIBOSOMAL SUBUNIT PROTEIN EL13Y-RELATED"/>
    <property type="match status" value="1"/>
</dbReference>
<dbReference type="Pfam" id="PF01294">
    <property type="entry name" value="Ribosomal_L13e"/>
    <property type="match status" value="1"/>
</dbReference>
<dbReference type="PROSITE" id="PS01104">
    <property type="entry name" value="RIBOSOMAL_L13E"/>
    <property type="match status" value="1"/>
</dbReference>
<name>RL131_ARATH</name>
<feature type="chain" id="PRO_0000192930" description="Large ribosomal subunit protein eL13z">
    <location>
        <begin position="1"/>
        <end position="206"/>
    </location>
</feature>
<feature type="region of interest" description="Disordered" evidence="1">
    <location>
        <begin position="185"/>
        <end position="206"/>
    </location>
</feature>
<feature type="compositionally biased region" description="Basic residues" evidence="1">
    <location>
        <begin position="186"/>
        <end position="195"/>
    </location>
</feature>
<feature type="compositionally biased region" description="Basic and acidic residues" evidence="1">
    <location>
        <begin position="196"/>
        <end position="206"/>
    </location>
</feature>
<feature type="sequence conflict" description="In Ref. 6." evidence="4" ref="6">
    <original>F</original>
    <variation>S</variation>
    <location>
        <position position="125"/>
    </location>
</feature>
<feature type="sequence conflict" description="In Ref. 5; AAM61490." evidence="4" ref="5">
    <original>K</original>
    <variation>M</variation>
    <location>
        <position position="175"/>
    </location>
</feature>
<feature type="sequence conflict" description="In Ref. 6; CAA84015." evidence="4" ref="6">
    <original>A</original>
    <variation>V</variation>
    <location>
        <position position="197"/>
    </location>
</feature>
<keyword id="KW-0025">Alternative splicing</keyword>
<keyword id="KW-0963">Cytoplasm</keyword>
<keyword id="KW-1185">Reference proteome</keyword>
<keyword id="KW-0687">Ribonucleoprotein</keyword>
<keyword id="KW-0689">Ribosomal protein</keyword>
<proteinExistence type="evidence at protein level"/>
<gene>
    <name type="primary">RPL13B</name>
    <name type="synonym">BBC1</name>
    <name type="ordered locus">At3g49010</name>
    <name type="ORF">T2J13.150</name>
</gene>
<comment type="subcellular location">
    <subcellularLocation>
        <location>Cytoplasm</location>
    </subcellularLocation>
</comment>
<comment type="alternative products">
    <event type="alternative splicing"/>
    <isoform>
        <id>P41127-1</id>
        <name>1</name>
        <sequence type="displayed"/>
    </isoform>
    <text>A number of isoforms are produced. According to EST sequences.</text>
</comment>
<comment type="developmental stage">
    <text evidence="2">Regulated during fruit maturation.</text>
</comment>
<comment type="similarity">
    <text evidence="4">Belongs to the eukaryotic ribosomal protein eL13 family.</text>
</comment>
<reference key="1">
    <citation type="journal article" date="1994" name="Gene">
        <title>Conservation of the human breast basic conserved 1 gene in the plant kingdom: characterization of a cDNA clone from Arabidopsis thaliana.</title>
        <authorList>
            <person name="Bertauche N."/>
            <person name="Leung J."/>
            <person name="Giraudat J."/>
        </authorList>
    </citation>
    <scope>NUCLEOTIDE SEQUENCE [MRNA]</scope>
    <scope>DEVELOPMENTAL STAGE</scope>
    <source>
        <strain>cv. Columbia</strain>
    </source>
</reference>
<reference key="2">
    <citation type="journal article" date="2000" name="Nature">
        <title>Sequence and analysis of chromosome 3 of the plant Arabidopsis thaliana.</title>
        <authorList>
            <person name="Salanoubat M."/>
            <person name="Lemcke K."/>
            <person name="Rieger M."/>
            <person name="Ansorge W."/>
            <person name="Unseld M."/>
            <person name="Fartmann B."/>
            <person name="Valle G."/>
            <person name="Bloecker H."/>
            <person name="Perez-Alonso M."/>
            <person name="Obermaier B."/>
            <person name="Delseny M."/>
            <person name="Boutry M."/>
            <person name="Grivell L.A."/>
            <person name="Mache R."/>
            <person name="Puigdomenech P."/>
            <person name="De Simone V."/>
            <person name="Choisne N."/>
            <person name="Artiguenave F."/>
            <person name="Robert C."/>
            <person name="Brottier P."/>
            <person name="Wincker P."/>
            <person name="Cattolico L."/>
            <person name="Weissenbach J."/>
            <person name="Saurin W."/>
            <person name="Quetier F."/>
            <person name="Schaefer M."/>
            <person name="Mueller-Auer S."/>
            <person name="Gabel C."/>
            <person name="Fuchs M."/>
            <person name="Benes V."/>
            <person name="Wurmbach E."/>
            <person name="Drzonek H."/>
            <person name="Erfle H."/>
            <person name="Jordan N."/>
            <person name="Bangert S."/>
            <person name="Wiedelmann R."/>
            <person name="Kranz H."/>
            <person name="Voss H."/>
            <person name="Holland R."/>
            <person name="Brandt P."/>
            <person name="Nyakatura G."/>
            <person name="Vezzi A."/>
            <person name="D'Angelo M."/>
            <person name="Pallavicini A."/>
            <person name="Toppo S."/>
            <person name="Simionati B."/>
            <person name="Conrad A."/>
            <person name="Hornischer K."/>
            <person name="Kauer G."/>
            <person name="Loehnert T.-H."/>
            <person name="Nordsiek G."/>
            <person name="Reichelt J."/>
            <person name="Scharfe M."/>
            <person name="Schoen O."/>
            <person name="Bargues M."/>
            <person name="Terol J."/>
            <person name="Climent J."/>
            <person name="Navarro P."/>
            <person name="Collado C."/>
            <person name="Perez-Perez A."/>
            <person name="Ottenwaelder B."/>
            <person name="Duchemin D."/>
            <person name="Cooke R."/>
            <person name="Laudie M."/>
            <person name="Berger-Llauro C."/>
            <person name="Purnelle B."/>
            <person name="Masuy D."/>
            <person name="de Haan M."/>
            <person name="Maarse A.C."/>
            <person name="Alcaraz J.-P."/>
            <person name="Cottet A."/>
            <person name="Casacuberta E."/>
            <person name="Monfort A."/>
            <person name="Argiriou A."/>
            <person name="Flores M."/>
            <person name="Liguori R."/>
            <person name="Vitale D."/>
            <person name="Mannhaupt G."/>
            <person name="Haase D."/>
            <person name="Schoof H."/>
            <person name="Rudd S."/>
            <person name="Zaccaria P."/>
            <person name="Mewes H.-W."/>
            <person name="Mayer K.F.X."/>
            <person name="Kaul S."/>
            <person name="Town C.D."/>
            <person name="Koo H.L."/>
            <person name="Tallon L.J."/>
            <person name="Jenkins J."/>
            <person name="Rooney T."/>
            <person name="Rizzo M."/>
            <person name="Walts A."/>
            <person name="Utterback T."/>
            <person name="Fujii C.Y."/>
            <person name="Shea T.P."/>
            <person name="Creasy T.H."/>
            <person name="Haas B."/>
            <person name="Maiti R."/>
            <person name="Wu D."/>
            <person name="Peterson J."/>
            <person name="Van Aken S."/>
            <person name="Pai G."/>
            <person name="Militscher J."/>
            <person name="Sellers P."/>
            <person name="Gill J.E."/>
            <person name="Feldblyum T.V."/>
            <person name="Preuss D."/>
            <person name="Lin X."/>
            <person name="Nierman W.C."/>
            <person name="Salzberg S.L."/>
            <person name="White O."/>
            <person name="Venter J.C."/>
            <person name="Fraser C.M."/>
            <person name="Kaneko T."/>
            <person name="Nakamura Y."/>
            <person name="Sato S."/>
            <person name="Kato T."/>
            <person name="Asamizu E."/>
            <person name="Sasamoto S."/>
            <person name="Kimura T."/>
            <person name="Idesawa K."/>
            <person name="Kawashima K."/>
            <person name="Kishida Y."/>
            <person name="Kiyokawa C."/>
            <person name="Kohara M."/>
            <person name="Matsumoto M."/>
            <person name="Matsuno A."/>
            <person name="Muraki A."/>
            <person name="Nakayama S."/>
            <person name="Nakazaki N."/>
            <person name="Shinpo S."/>
            <person name="Takeuchi C."/>
            <person name="Wada T."/>
            <person name="Watanabe A."/>
            <person name="Yamada M."/>
            <person name="Yasuda M."/>
            <person name="Tabata S."/>
        </authorList>
    </citation>
    <scope>NUCLEOTIDE SEQUENCE [LARGE SCALE GENOMIC DNA]</scope>
    <source>
        <strain>cv. Columbia</strain>
    </source>
</reference>
<reference key="3">
    <citation type="journal article" date="2017" name="Plant J.">
        <title>Araport11: a complete reannotation of the Arabidopsis thaliana reference genome.</title>
        <authorList>
            <person name="Cheng C.Y."/>
            <person name="Krishnakumar V."/>
            <person name="Chan A.P."/>
            <person name="Thibaud-Nissen F."/>
            <person name="Schobel S."/>
            <person name="Town C.D."/>
        </authorList>
    </citation>
    <scope>GENOME REANNOTATION</scope>
    <source>
        <strain>cv. Columbia</strain>
    </source>
</reference>
<reference key="4">
    <citation type="journal article" date="2003" name="Science">
        <title>Empirical analysis of transcriptional activity in the Arabidopsis genome.</title>
        <authorList>
            <person name="Yamada K."/>
            <person name="Lim J."/>
            <person name="Dale J.M."/>
            <person name="Chen H."/>
            <person name="Shinn P."/>
            <person name="Palm C.J."/>
            <person name="Southwick A.M."/>
            <person name="Wu H.C."/>
            <person name="Kim C.J."/>
            <person name="Nguyen M."/>
            <person name="Pham P.K."/>
            <person name="Cheuk R.F."/>
            <person name="Karlin-Newmann G."/>
            <person name="Liu S.X."/>
            <person name="Lam B."/>
            <person name="Sakano H."/>
            <person name="Wu T."/>
            <person name="Yu G."/>
            <person name="Miranda M."/>
            <person name="Quach H.L."/>
            <person name="Tripp M."/>
            <person name="Chang C.H."/>
            <person name="Lee J.M."/>
            <person name="Toriumi M.J."/>
            <person name="Chan M.M."/>
            <person name="Tang C.C."/>
            <person name="Onodera C.S."/>
            <person name="Deng J.M."/>
            <person name="Akiyama K."/>
            <person name="Ansari Y."/>
            <person name="Arakawa T."/>
            <person name="Banh J."/>
            <person name="Banno F."/>
            <person name="Bowser L."/>
            <person name="Brooks S.Y."/>
            <person name="Carninci P."/>
            <person name="Chao Q."/>
            <person name="Choy N."/>
            <person name="Enju A."/>
            <person name="Goldsmith A.D."/>
            <person name="Gurjal M."/>
            <person name="Hansen N.F."/>
            <person name="Hayashizaki Y."/>
            <person name="Johnson-Hopson C."/>
            <person name="Hsuan V.W."/>
            <person name="Iida K."/>
            <person name="Karnes M."/>
            <person name="Khan S."/>
            <person name="Koesema E."/>
            <person name="Ishida J."/>
            <person name="Jiang P.X."/>
            <person name="Jones T."/>
            <person name="Kawai J."/>
            <person name="Kamiya A."/>
            <person name="Meyers C."/>
            <person name="Nakajima M."/>
            <person name="Narusaka M."/>
            <person name="Seki M."/>
            <person name="Sakurai T."/>
            <person name="Satou M."/>
            <person name="Tamse R."/>
            <person name="Vaysberg M."/>
            <person name="Wallender E.K."/>
            <person name="Wong C."/>
            <person name="Yamamura Y."/>
            <person name="Yuan S."/>
            <person name="Shinozaki K."/>
            <person name="Davis R.W."/>
            <person name="Theologis A."/>
            <person name="Ecker J.R."/>
        </authorList>
    </citation>
    <scope>NUCLEOTIDE SEQUENCE [LARGE SCALE MRNA]</scope>
    <source>
        <strain>cv. Columbia</strain>
    </source>
</reference>
<reference key="5">
    <citation type="submission" date="2002-03" db="EMBL/GenBank/DDBJ databases">
        <title>Full-length cDNA from Arabidopsis thaliana.</title>
        <authorList>
            <person name="Brover V.V."/>
            <person name="Troukhan M.E."/>
            <person name="Alexandrov N.A."/>
            <person name="Lu Y.-P."/>
            <person name="Flavell R.B."/>
            <person name="Feldmann K.A."/>
        </authorList>
    </citation>
    <scope>NUCLEOTIDE SEQUENCE [LARGE SCALE MRNA]</scope>
</reference>
<reference key="6">
    <citation type="journal article" date="1996" name="Plant J.">
        <title>Further progress towards a catalogue of all Arabidopsis genes: analysis of a set of 5000 non-redundant ESTs.</title>
        <authorList>
            <person name="Cooke R."/>
            <person name="Raynal M."/>
            <person name="Laudie M."/>
            <person name="Grellet F."/>
            <person name="Delseny M."/>
            <person name="Morris P.-C."/>
            <person name="Guerrier D."/>
            <person name="Giraudat J."/>
            <person name="Quigley F."/>
            <person name="Clabault G."/>
            <person name="Li Y.-F."/>
            <person name="Mache R."/>
            <person name="Krivitzky M."/>
            <person name="Gy I.J.-J."/>
            <person name="Kreis M."/>
            <person name="Lecharny A."/>
            <person name="Parmentier Y."/>
            <person name="Marbach J."/>
            <person name="Fleck J."/>
            <person name="Clement B."/>
            <person name="Philipps G."/>
            <person name="Herve C."/>
            <person name="Bardet C."/>
            <person name="Tremousaygue D."/>
            <person name="Lescure B."/>
            <person name="Lacomme C."/>
            <person name="Roby D."/>
            <person name="Jourjon M.-F."/>
            <person name="Chabrier P."/>
            <person name="Charpenteau J.-L."/>
            <person name="Desprez T."/>
            <person name="Amselem J."/>
            <person name="Chiapello H."/>
            <person name="Hoefte H."/>
        </authorList>
    </citation>
    <scope>NUCLEOTIDE SEQUENCE [LARGE SCALE MRNA] OF 125-206</scope>
    <source>
        <strain>cv. Columbia</strain>
    </source>
</reference>
<reference key="7">
    <citation type="journal article" date="2001" name="Plant Physiol.">
        <title>The organization of cytoplasmic ribosomal protein genes in the Arabidopsis genome.</title>
        <authorList>
            <person name="Barakat A."/>
            <person name="Szick-Miranda K."/>
            <person name="Chang I.-F."/>
            <person name="Guyot R."/>
            <person name="Blanc G."/>
            <person name="Cooke R."/>
            <person name="Delseny M."/>
            <person name="Bailey-Serres J."/>
        </authorList>
    </citation>
    <scope>GENE FAMILY ORGANIZATION</scope>
    <scope>NOMENCLATURE</scope>
</reference>
<reference key="8">
    <citation type="journal article" date="2008" name="J. Proteome Res.">
        <title>Site-specific phosphorylation profiling of Arabidopsis proteins by mass spectrometry and peptide chip analysis.</title>
        <authorList>
            <person name="de la Fuente van Bentem S."/>
            <person name="Anrather D."/>
            <person name="Dohnal I."/>
            <person name="Roitinger E."/>
            <person name="Csaszar E."/>
            <person name="Joore J."/>
            <person name="Buijnink J."/>
            <person name="Carreri A."/>
            <person name="Forzani C."/>
            <person name="Lorkovic Z.J."/>
            <person name="Barta A."/>
            <person name="Lecourieux D."/>
            <person name="Verhounig A."/>
            <person name="Jonak C."/>
            <person name="Hirt H."/>
        </authorList>
    </citation>
    <scope>IDENTIFICATION BY MASS SPECTROMETRY [LARGE SCALE ANALYSIS]</scope>
    <source>
        <tissue>Root</tissue>
    </source>
</reference>
<reference key="9">
    <citation type="journal article" date="2009" name="J. Proteomics">
        <title>Phosphoproteomic analysis of nuclei-enriched fractions from Arabidopsis thaliana.</title>
        <authorList>
            <person name="Jones A.M.E."/>
            <person name="MacLean D."/>
            <person name="Studholme D.J."/>
            <person name="Serna-Sanz A."/>
            <person name="Andreasson E."/>
            <person name="Rathjen J.P."/>
            <person name="Peck S.C."/>
        </authorList>
    </citation>
    <scope>IDENTIFICATION BY MASS SPECTROMETRY [LARGE SCALE ANALYSIS]</scope>
    <source>
        <strain>cv. Columbia</strain>
    </source>
</reference>
<reference key="10">
    <citation type="journal article" date="2009" name="Plant Physiol.">
        <title>Large-scale Arabidopsis phosphoproteome profiling reveals novel chloroplast kinase substrates and phosphorylation networks.</title>
        <authorList>
            <person name="Reiland S."/>
            <person name="Messerli G."/>
            <person name="Baerenfaller K."/>
            <person name="Gerrits B."/>
            <person name="Endler A."/>
            <person name="Grossmann J."/>
            <person name="Gruissem W."/>
            <person name="Baginsky S."/>
        </authorList>
    </citation>
    <scope>IDENTIFICATION BY MASS SPECTROMETRY [LARGE SCALE ANALYSIS]</scope>
</reference>
<reference key="11">
    <citation type="journal article" date="2023" name="Plant Cell">
        <title>An updated nomenclature for plant ribosomal protein genes.</title>
        <authorList>
            <person name="Scarpin M.R."/>
            <person name="Busche M."/>
            <person name="Martinez R.E."/>
            <person name="Harper L.C."/>
            <person name="Reiser L."/>
            <person name="Szakonyi D."/>
            <person name="Merchante C."/>
            <person name="Lan T."/>
            <person name="Xiong W."/>
            <person name="Mo B."/>
            <person name="Tang G."/>
            <person name="Chen X."/>
            <person name="Bailey-Serres J."/>
            <person name="Browning K.S."/>
            <person name="Brunkard J.O."/>
        </authorList>
    </citation>
    <scope>NOMENCLATURE</scope>
</reference>
<evidence type="ECO:0000256" key="1">
    <source>
        <dbReference type="SAM" id="MobiDB-lite"/>
    </source>
</evidence>
<evidence type="ECO:0000269" key="2">
    <source>
    </source>
</evidence>
<evidence type="ECO:0000303" key="3">
    <source>
    </source>
</evidence>
<evidence type="ECO:0000305" key="4"/>
<organism>
    <name type="scientific">Arabidopsis thaliana</name>
    <name type="common">Mouse-ear cress</name>
    <dbReference type="NCBI Taxonomy" id="3702"/>
    <lineage>
        <taxon>Eukaryota</taxon>
        <taxon>Viridiplantae</taxon>
        <taxon>Streptophyta</taxon>
        <taxon>Embryophyta</taxon>
        <taxon>Tracheophyta</taxon>
        <taxon>Spermatophyta</taxon>
        <taxon>Magnoliopsida</taxon>
        <taxon>eudicotyledons</taxon>
        <taxon>Gunneridae</taxon>
        <taxon>Pentapetalae</taxon>
        <taxon>rosids</taxon>
        <taxon>malvids</taxon>
        <taxon>Brassicales</taxon>
        <taxon>Brassicaceae</taxon>
        <taxon>Camelineae</taxon>
        <taxon>Arabidopsis</taxon>
    </lineage>
</organism>
<protein>
    <recommendedName>
        <fullName evidence="3">Large ribosomal subunit protein eL13z</fullName>
    </recommendedName>
    <alternativeName>
        <fullName>60S ribosomal protein L13-1</fullName>
    </alternativeName>
    <alternativeName>
        <fullName>Protein BBC1 homolog</fullName>
    </alternativeName>
</protein>
<accession>P41127</accession>
<accession>Q42280</accession>
<accession>Q8LFC4</accession>
<sequence>MKHNNVIPNGHFKKHWQNYVKTWFNQPARKTRRRIARQKKAVKIFPRPTSGPLRPVVHGQTLKYNMKVRTGKGFTLEELKAAGIPKKLAPTIGIAVDHRRKNRSLEGLQTNVQRLKTYKTKLVIFPRRARKVKAGDSTPEELANATQVQGDYLPIVREKPTMELVKLTSEMKSFKAFDKIRLERTNKRHAGARAKRAAEAEKEEKK</sequence>